<comment type="function">
    <text evidence="1">Catalyzes the transfer of the enolpyruvyl moiety of phosphoenolpyruvate (PEP) to the 5-hydroxyl of shikimate-3-phosphate (S3P) to produce enolpyruvyl shikimate-3-phosphate and inorganic phosphate.</text>
</comment>
<comment type="catalytic activity">
    <reaction evidence="1">
        <text>3-phosphoshikimate + phosphoenolpyruvate = 5-O-(1-carboxyvinyl)-3-phosphoshikimate + phosphate</text>
        <dbReference type="Rhea" id="RHEA:21256"/>
        <dbReference type="ChEBI" id="CHEBI:43474"/>
        <dbReference type="ChEBI" id="CHEBI:57701"/>
        <dbReference type="ChEBI" id="CHEBI:58702"/>
        <dbReference type="ChEBI" id="CHEBI:145989"/>
        <dbReference type="EC" id="2.5.1.19"/>
    </reaction>
    <physiologicalReaction direction="left-to-right" evidence="1">
        <dbReference type="Rhea" id="RHEA:21257"/>
    </physiologicalReaction>
</comment>
<comment type="pathway">
    <text evidence="1">Metabolic intermediate biosynthesis; chorismate biosynthesis.</text>
</comment>
<comment type="subunit">
    <text evidence="1">Monomer.</text>
</comment>
<comment type="subcellular location">
    <subcellularLocation>
        <location evidence="1">Cytoplasm</location>
    </subcellularLocation>
</comment>
<comment type="similarity">
    <text evidence="1">Belongs to the EPSP synthase family.</text>
</comment>
<proteinExistence type="inferred from homology"/>
<sequence length="422" mass="43626">MKLIVSRSQISGCVHAPPSKSHTHRAFLLASLAKGESVVLSPLLGEDTLATLSAVKALGANVCEGDDRITIQGGNLHAPLPKGTVINCKNSGTSIRMLAGIASRLDGTTEFTGDASLCSRPMKPLLDALSELGAGVTSDNGCAPFTITGPVSGGDVHIRGDVSSQFISGLLISAPLGKADTRIHLTTPLTSKPYVDMTISAMKKHGVSVETIEDGYLVRSGQVYSSEDVQVGGDYSSAAFLFAAAALAGEIAVSGLDPADPQGDQVVISILETFGAGVVRDGENVTIRKAALKAADIDLANAPDLFPIIAVLASQAKGTSRLYGAAHLRFKESDRIMSTVLFLRSMGADISETEDGCIVTGPANLSGANVTTFGDHRIMMASAVAGLIADSTTTVDDAGCCAVSYPGFVKDMQKLGADMREE</sequence>
<accession>A2SU05</accession>
<organism>
    <name type="scientific">Methanocorpusculum labreanum (strain ATCC 43576 / DSM 4855 / Z)</name>
    <dbReference type="NCBI Taxonomy" id="410358"/>
    <lineage>
        <taxon>Archaea</taxon>
        <taxon>Methanobacteriati</taxon>
        <taxon>Methanobacteriota</taxon>
        <taxon>Stenosarchaea group</taxon>
        <taxon>Methanomicrobia</taxon>
        <taxon>Methanomicrobiales</taxon>
        <taxon>Methanocorpusculaceae</taxon>
        <taxon>Methanocorpusculum</taxon>
    </lineage>
</organism>
<name>AROA_METLZ</name>
<feature type="chain" id="PRO_1000012451" description="3-phosphoshikimate 1-carboxyvinyltransferase">
    <location>
        <begin position="1"/>
        <end position="422"/>
    </location>
</feature>
<feature type="active site" description="Proton acceptor" evidence="1">
    <location>
        <position position="304"/>
    </location>
</feature>
<feature type="binding site" evidence="1">
    <location>
        <position position="20"/>
    </location>
    <ligand>
        <name>3-phosphoshikimate</name>
        <dbReference type="ChEBI" id="CHEBI:145989"/>
    </ligand>
</feature>
<feature type="binding site" evidence="1">
    <location>
        <position position="20"/>
    </location>
    <ligand>
        <name>phosphoenolpyruvate</name>
        <dbReference type="ChEBI" id="CHEBI:58702"/>
    </ligand>
</feature>
<feature type="binding site" evidence="1">
    <location>
        <position position="21"/>
    </location>
    <ligand>
        <name>3-phosphoshikimate</name>
        <dbReference type="ChEBI" id="CHEBI:145989"/>
    </ligand>
</feature>
<feature type="binding site" evidence="1">
    <location>
        <position position="25"/>
    </location>
    <ligand>
        <name>3-phosphoshikimate</name>
        <dbReference type="ChEBI" id="CHEBI:145989"/>
    </ligand>
</feature>
<feature type="binding site" evidence="1">
    <location>
        <position position="92"/>
    </location>
    <ligand>
        <name>phosphoenolpyruvate</name>
        <dbReference type="ChEBI" id="CHEBI:58702"/>
    </ligand>
</feature>
<feature type="binding site" evidence="1">
    <location>
        <position position="120"/>
    </location>
    <ligand>
        <name>phosphoenolpyruvate</name>
        <dbReference type="ChEBI" id="CHEBI:58702"/>
    </ligand>
</feature>
<feature type="binding site" evidence="1">
    <location>
        <position position="163"/>
    </location>
    <ligand>
        <name>3-phosphoshikimate</name>
        <dbReference type="ChEBI" id="CHEBI:145989"/>
    </ligand>
</feature>
<feature type="binding site" evidence="1">
    <location>
        <position position="164"/>
    </location>
    <ligand>
        <name>3-phosphoshikimate</name>
        <dbReference type="ChEBI" id="CHEBI:145989"/>
    </ligand>
</feature>
<feature type="binding site" evidence="1">
    <location>
        <position position="165"/>
    </location>
    <ligand>
        <name>3-phosphoshikimate</name>
        <dbReference type="ChEBI" id="CHEBI:145989"/>
    </ligand>
</feature>
<feature type="binding site" evidence="1">
    <location>
        <position position="165"/>
    </location>
    <ligand>
        <name>phosphoenolpyruvate</name>
        <dbReference type="ChEBI" id="CHEBI:58702"/>
    </ligand>
</feature>
<feature type="binding site" evidence="1">
    <location>
        <position position="191"/>
    </location>
    <ligand>
        <name>3-phosphoshikimate</name>
        <dbReference type="ChEBI" id="CHEBI:145989"/>
    </ligand>
</feature>
<feature type="binding site" evidence="1">
    <location>
        <position position="304"/>
    </location>
    <ligand>
        <name>3-phosphoshikimate</name>
        <dbReference type="ChEBI" id="CHEBI:145989"/>
    </ligand>
</feature>
<feature type="binding site" evidence="1">
    <location>
        <position position="331"/>
    </location>
    <ligand>
        <name>3-phosphoshikimate</name>
        <dbReference type="ChEBI" id="CHEBI:145989"/>
    </ligand>
</feature>
<feature type="binding site" evidence="1">
    <location>
        <position position="335"/>
    </location>
    <ligand>
        <name>phosphoenolpyruvate</name>
        <dbReference type="ChEBI" id="CHEBI:58702"/>
    </ligand>
</feature>
<feature type="binding site" evidence="1">
    <location>
        <position position="377"/>
    </location>
    <ligand>
        <name>phosphoenolpyruvate</name>
        <dbReference type="ChEBI" id="CHEBI:58702"/>
    </ligand>
</feature>
<gene>
    <name evidence="1" type="primary">aroA</name>
    <name type="ordered locus">Mlab_1650</name>
</gene>
<reference key="1">
    <citation type="journal article" date="2009" name="Stand. Genomic Sci.">
        <title>Complete genome sequence of Methanocorpusculum labreanum type strain Z.</title>
        <authorList>
            <person name="Anderson I.J."/>
            <person name="Sieprawska-Lupa M."/>
            <person name="Goltsman E."/>
            <person name="Lapidus A."/>
            <person name="Copeland A."/>
            <person name="Glavina Del Rio T."/>
            <person name="Tice H."/>
            <person name="Dalin E."/>
            <person name="Barry K."/>
            <person name="Pitluck S."/>
            <person name="Hauser L."/>
            <person name="Land M."/>
            <person name="Lucas S."/>
            <person name="Richardson P."/>
            <person name="Whitman W.B."/>
            <person name="Kyrpides N.C."/>
        </authorList>
    </citation>
    <scope>NUCLEOTIDE SEQUENCE [LARGE SCALE GENOMIC DNA]</scope>
    <source>
        <strain>ATCC 43576 / DSM 4855 / Z</strain>
    </source>
</reference>
<keyword id="KW-0028">Amino-acid biosynthesis</keyword>
<keyword id="KW-0057">Aromatic amino acid biosynthesis</keyword>
<keyword id="KW-0963">Cytoplasm</keyword>
<keyword id="KW-1185">Reference proteome</keyword>
<keyword id="KW-0808">Transferase</keyword>
<dbReference type="EC" id="2.5.1.19" evidence="1"/>
<dbReference type="EMBL" id="CP000559">
    <property type="protein sequence ID" value="ABN07811.1"/>
    <property type="molecule type" value="Genomic_DNA"/>
</dbReference>
<dbReference type="RefSeq" id="WP_011834014.1">
    <property type="nucleotide sequence ID" value="NC_008942.1"/>
</dbReference>
<dbReference type="SMR" id="A2SU05"/>
<dbReference type="STRING" id="410358.Mlab_1650"/>
<dbReference type="GeneID" id="4795407"/>
<dbReference type="KEGG" id="mla:Mlab_1650"/>
<dbReference type="eggNOG" id="arCOG04134">
    <property type="taxonomic scope" value="Archaea"/>
</dbReference>
<dbReference type="HOGENOM" id="CLU_024321_0_0_2"/>
<dbReference type="OrthoDB" id="43788at2157"/>
<dbReference type="UniPathway" id="UPA00053"/>
<dbReference type="Proteomes" id="UP000000365">
    <property type="component" value="Chromosome"/>
</dbReference>
<dbReference type="GO" id="GO:0005737">
    <property type="term" value="C:cytoplasm"/>
    <property type="evidence" value="ECO:0007669"/>
    <property type="project" value="UniProtKB-SubCell"/>
</dbReference>
<dbReference type="GO" id="GO:0003866">
    <property type="term" value="F:3-phosphoshikimate 1-carboxyvinyltransferase activity"/>
    <property type="evidence" value="ECO:0007669"/>
    <property type="project" value="UniProtKB-UniRule"/>
</dbReference>
<dbReference type="GO" id="GO:0008652">
    <property type="term" value="P:amino acid biosynthetic process"/>
    <property type="evidence" value="ECO:0007669"/>
    <property type="project" value="UniProtKB-KW"/>
</dbReference>
<dbReference type="GO" id="GO:0009073">
    <property type="term" value="P:aromatic amino acid family biosynthetic process"/>
    <property type="evidence" value="ECO:0007669"/>
    <property type="project" value="UniProtKB-KW"/>
</dbReference>
<dbReference type="GO" id="GO:0009423">
    <property type="term" value="P:chorismate biosynthetic process"/>
    <property type="evidence" value="ECO:0007669"/>
    <property type="project" value="UniProtKB-UniRule"/>
</dbReference>
<dbReference type="CDD" id="cd01556">
    <property type="entry name" value="EPSP_synthase"/>
    <property type="match status" value="1"/>
</dbReference>
<dbReference type="Gene3D" id="3.65.10.10">
    <property type="entry name" value="Enolpyruvate transferase domain"/>
    <property type="match status" value="2"/>
</dbReference>
<dbReference type="HAMAP" id="MF_00210">
    <property type="entry name" value="EPSP_synth"/>
    <property type="match status" value="1"/>
</dbReference>
<dbReference type="InterPro" id="IPR001986">
    <property type="entry name" value="Enolpyruvate_Tfrase_dom"/>
</dbReference>
<dbReference type="InterPro" id="IPR036968">
    <property type="entry name" value="Enolpyruvate_Tfrase_sf"/>
</dbReference>
<dbReference type="InterPro" id="IPR006264">
    <property type="entry name" value="EPSP_synthase"/>
</dbReference>
<dbReference type="InterPro" id="IPR023193">
    <property type="entry name" value="EPSP_synthase_CS"/>
</dbReference>
<dbReference type="InterPro" id="IPR013792">
    <property type="entry name" value="RNA3'P_cycl/enolpyr_Trfase_a/b"/>
</dbReference>
<dbReference type="NCBIfam" id="TIGR01356">
    <property type="entry name" value="aroA"/>
    <property type="match status" value="1"/>
</dbReference>
<dbReference type="PANTHER" id="PTHR21090">
    <property type="entry name" value="AROM/DEHYDROQUINATE SYNTHASE"/>
    <property type="match status" value="1"/>
</dbReference>
<dbReference type="PANTHER" id="PTHR21090:SF5">
    <property type="entry name" value="PENTAFUNCTIONAL AROM POLYPEPTIDE"/>
    <property type="match status" value="1"/>
</dbReference>
<dbReference type="Pfam" id="PF00275">
    <property type="entry name" value="EPSP_synthase"/>
    <property type="match status" value="1"/>
</dbReference>
<dbReference type="PIRSF" id="PIRSF000505">
    <property type="entry name" value="EPSPS"/>
    <property type="match status" value="1"/>
</dbReference>
<dbReference type="SUPFAM" id="SSF55205">
    <property type="entry name" value="EPT/RTPC-like"/>
    <property type="match status" value="1"/>
</dbReference>
<dbReference type="PROSITE" id="PS00104">
    <property type="entry name" value="EPSP_SYNTHASE_1"/>
    <property type="match status" value="1"/>
</dbReference>
<dbReference type="PROSITE" id="PS00885">
    <property type="entry name" value="EPSP_SYNTHASE_2"/>
    <property type="match status" value="1"/>
</dbReference>
<evidence type="ECO:0000255" key="1">
    <source>
        <dbReference type="HAMAP-Rule" id="MF_00210"/>
    </source>
</evidence>
<protein>
    <recommendedName>
        <fullName evidence="1">3-phosphoshikimate 1-carboxyvinyltransferase</fullName>
        <ecNumber evidence="1">2.5.1.19</ecNumber>
    </recommendedName>
    <alternativeName>
        <fullName evidence="1">5-enolpyruvylshikimate-3-phosphate synthase</fullName>
        <shortName evidence="1">EPSP synthase</shortName>
        <shortName evidence="1">EPSPS</shortName>
    </alternativeName>
</protein>